<organism>
    <name type="scientific">Synechococcus sp. (strain ATCC 27144 / PCC 6301 / SAUG 1402/1)</name>
    <name type="common">Anacystis nidulans</name>
    <dbReference type="NCBI Taxonomy" id="269084"/>
    <lineage>
        <taxon>Bacteria</taxon>
        <taxon>Bacillati</taxon>
        <taxon>Cyanobacteriota</taxon>
        <taxon>Cyanophyceae</taxon>
        <taxon>Synechococcales</taxon>
        <taxon>Synechococcaceae</taxon>
        <taxon>Synechococcus</taxon>
    </lineage>
</organism>
<dbReference type="EMBL" id="AP008231">
    <property type="protein sequence ID" value="BAD79823.1"/>
    <property type="molecule type" value="Genomic_DNA"/>
</dbReference>
<dbReference type="RefSeq" id="WP_011243943.1">
    <property type="nucleotide sequence ID" value="NZ_CP085785.1"/>
</dbReference>
<dbReference type="SMR" id="Q5N1J7"/>
<dbReference type="GeneID" id="72431364"/>
<dbReference type="KEGG" id="syc:syc1633_c"/>
<dbReference type="eggNOG" id="COG0781">
    <property type="taxonomic scope" value="Bacteria"/>
</dbReference>
<dbReference type="Proteomes" id="UP000001175">
    <property type="component" value="Chromosome"/>
</dbReference>
<dbReference type="GO" id="GO:0005829">
    <property type="term" value="C:cytosol"/>
    <property type="evidence" value="ECO:0007669"/>
    <property type="project" value="TreeGrafter"/>
</dbReference>
<dbReference type="GO" id="GO:0003723">
    <property type="term" value="F:RNA binding"/>
    <property type="evidence" value="ECO:0007669"/>
    <property type="project" value="UniProtKB-UniRule"/>
</dbReference>
<dbReference type="GO" id="GO:0006353">
    <property type="term" value="P:DNA-templated transcription termination"/>
    <property type="evidence" value="ECO:0007669"/>
    <property type="project" value="UniProtKB-UniRule"/>
</dbReference>
<dbReference type="GO" id="GO:0031564">
    <property type="term" value="P:transcription antitermination"/>
    <property type="evidence" value="ECO:0007669"/>
    <property type="project" value="UniProtKB-KW"/>
</dbReference>
<dbReference type="Gene3D" id="1.10.940.10">
    <property type="entry name" value="NusB-like"/>
    <property type="match status" value="1"/>
</dbReference>
<dbReference type="HAMAP" id="MF_00073">
    <property type="entry name" value="NusB"/>
    <property type="match status" value="1"/>
</dbReference>
<dbReference type="InterPro" id="IPR035926">
    <property type="entry name" value="NusB-like_sf"/>
</dbReference>
<dbReference type="InterPro" id="IPR011605">
    <property type="entry name" value="NusB_fam"/>
</dbReference>
<dbReference type="InterPro" id="IPR006027">
    <property type="entry name" value="NusB_RsmB_TIM44"/>
</dbReference>
<dbReference type="NCBIfam" id="TIGR01951">
    <property type="entry name" value="nusB"/>
    <property type="match status" value="1"/>
</dbReference>
<dbReference type="PANTHER" id="PTHR11078:SF3">
    <property type="entry name" value="ANTITERMINATION NUSB DOMAIN-CONTAINING PROTEIN"/>
    <property type="match status" value="1"/>
</dbReference>
<dbReference type="PANTHER" id="PTHR11078">
    <property type="entry name" value="N UTILIZATION SUBSTANCE PROTEIN B-RELATED"/>
    <property type="match status" value="1"/>
</dbReference>
<dbReference type="Pfam" id="PF01029">
    <property type="entry name" value="NusB"/>
    <property type="match status" value="1"/>
</dbReference>
<dbReference type="SUPFAM" id="SSF48013">
    <property type="entry name" value="NusB-like"/>
    <property type="match status" value="1"/>
</dbReference>
<comment type="function">
    <text evidence="1">Involved in transcription antitermination. Required for transcription of ribosomal RNA (rRNA) genes. Binds specifically to the boxA antiterminator sequence of the ribosomal RNA (rrn) operons.</text>
</comment>
<comment type="similarity">
    <text evidence="1">Belongs to the NusB family.</text>
</comment>
<reference key="1">
    <citation type="journal article" date="2007" name="Photosyn. Res.">
        <title>Complete nucleotide sequence of the freshwater unicellular cyanobacterium Synechococcus elongatus PCC 6301 chromosome: gene content and organization.</title>
        <authorList>
            <person name="Sugita C."/>
            <person name="Ogata K."/>
            <person name="Shikata M."/>
            <person name="Jikuya H."/>
            <person name="Takano J."/>
            <person name="Furumichi M."/>
            <person name="Kanehisa M."/>
            <person name="Omata T."/>
            <person name="Sugiura M."/>
            <person name="Sugita M."/>
        </authorList>
    </citation>
    <scope>NUCLEOTIDE SEQUENCE [LARGE SCALE GENOMIC DNA]</scope>
    <source>
        <strain>ATCC 27144 / PCC 6301 / SAUG 1402/1</strain>
    </source>
</reference>
<proteinExistence type="inferred from homology"/>
<sequence length="213" mass="23743">MQPRRIARELALLSLSQLPAKAEPPSDQMLSELLLAATRTLAAEARDHLEAASAELKQSSDRLLLSTLGSADLESSRAMLQEVIEMAQAAINRTGNALDLPEWVQLTDREEVRKFGGRLVLQVSNNRERIDRTLNDVMVDWQLHRVPRLDQDILRLAAAEILFLGTPEQVAINEAVELANRYSDEEGRRFINGVLRRLSTMLGKAARAARPSS</sequence>
<name>NUSB_SYNP6</name>
<feature type="chain" id="PRO_0000265611" description="Transcription antitermination protein NusB">
    <location>
        <begin position="1"/>
        <end position="213"/>
    </location>
</feature>
<keyword id="KW-0694">RNA-binding</keyword>
<keyword id="KW-0804">Transcription</keyword>
<keyword id="KW-0889">Transcription antitermination</keyword>
<keyword id="KW-0805">Transcription regulation</keyword>
<accession>Q5N1J7</accession>
<gene>
    <name evidence="1" type="primary">nusB</name>
    <name type="ordered locus">syc1633_c</name>
</gene>
<evidence type="ECO:0000255" key="1">
    <source>
        <dbReference type="HAMAP-Rule" id="MF_00073"/>
    </source>
</evidence>
<protein>
    <recommendedName>
        <fullName evidence="1">Transcription antitermination protein NusB</fullName>
    </recommendedName>
    <alternativeName>
        <fullName evidence="1">Antitermination factor NusB</fullName>
    </alternativeName>
</protein>